<evidence type="ECO:0000255" key="1">
    <source>
        <dbReference type="HAMAP-Rule" id="MF_00185"/>
    </source>
</evidence>
<reference key="1">
    <citation type="journal article" date="2007" name="Environ. Microbiol.">
        <title>Whole-genome analysis of the ammonia-oxidizing bacterium, Nitrosomonas eutropha C91: implications for niche adaptation.</title>
        <authorList>
            <person name="Stein L.Y."/>
            <person name="Arp D.J."/>
            <person name="Berube P.M."/>
            <person name="Chain P.S."/>
            <person name="Hauser L."/>
            <person name="Jetten M.S."/>
            <person name="Klotz M.G."/>
            <person name="Larimer F.W."/>
            <person name="Norton J.M."/>
            <person name="Op den Camp H.J.M."/>
            <person name="Shin M."/>
            <person name="Wei X."/>
        </authorList>
    </citation>
    <scope>NUCLEOTIDE SEQUENCE [LARGE SCALE GENOMIC DNA]</scope>
    <source>
        <strain>DSM 101675 / C91 / Nm57</strain>
    </source>
</reference>
<gene>
    <name evidence="1" type="primary">miaA</name>
    <name type="ordered locus">Neut_0386</name>
</gene>
<dbReference type="EC" id="2.5.1.75" evidence="1"/>
<dbReference type="EMBL" id="CP000450">
    <property type="protein sequence ID" value="ABI58664.1"/>
    <property type="molecule type" value="Genomic_DNA"/>
</dbReference>
<dbReference type="RefSeq" id="WP_011633506.1">
    <property type="nucleotide sequence ID" value="NC_008344.1"/>
</dbReference>
<dbReference type="SMR" id="Q0AJ07"/>
<dbReference type="STRING" id="335283.Neut_0386"/>
<dbReference type="KEGG" id="net:Neut_0386"/>
<dbReference type="eggNOG" id="COG0324">
    <property type="taxonomic scope" value="Bacteria"/>
</dbReference>
<dbReference type="HOGENOM" id="CLU_032616_0_0_4"/>
<dbReference type="OrthoDB" id="9776390at2"/>
<dbReference type="Proteomes" id="UP000001966">
    <property type="component" value="Chromosome"/>
</dbReference>
<dbReference type="GO" id="GO:0005524">
    <property type="term" value="F:ATP binding"/>
    <property type="evidence" value="ECO:0007669"/>
    <property type="project" value="UniProtKB-UniRule"/>
</dbReference>
<dbReference type="GO" id="GO:0052381">
    <property type="term" value="F:tRNA dimethylallyltransferase activity"/>
    <property type="evidence" value="ECO:0007669"/>
    <property type="project" value="UniProtKB-UniRule"/>
</dbReference>
<dbReference type="GO" id="GO:0006400">
    <property type="term" value="P:tRNA modification"/>
    <property type="evidence" value="ECO:0007669"/>
    <property type="project" value="TreeGrafter"/>
</dbReference>
<dbReference type="FunFam" id="1.10.20.140:FF:000001">
    <property type="entry name" value="tRNA dimethylallyltransferase"/>
    <property type="match status" value="1"/>
</dbReference>
<dbReference type="Gene3D" id="1.10.20.140">
    <property type="match status" value="1"/>
</dbReference>
<dbReference type="Gene3D" id="3.40.50.300">
    <property type="entry name" value="P-loop containing nucleotide triphosphate hydrolases"/>
    <property type="match status" value="1"/>
</dbReference>
<dbReference type="HAMAP" id="MF_00185">
    <property type="entry name" value="IPP_trans"/>
    <property type="match status" value="1"/>
</dbReference>
<dbReference type="InterPro" id="IPR039657">
    <property type="entry name" value="Dimethylallyltransferase"/>
</dbReference>
<dbReference type="InterPro" id="IPR018022">
    <property type="entry name" value="IPT"/>
</dbReference>
<dbReference type="InterPro" id="IPR027417">
    <property type="entry name" value="P-loop_NTPase"/>
</dbReference>
<dbReference type="NCBIfam" id="TIGR00174">
    <property type="entry name" value="miaA"/>
    <property type="match status" value="1"/>
</dbReference>
<dbReference type="PANTHER" id="PTHR11088">
    <property type="entry name" value="TRNA DIMETHYLALLYLTRANSFERASE"/>
    <property type="match status" value="1"/>
</dbReference>
<dbReference type="PANTHER" id="PTHR11088:SF60">
    <property type="entry name" value="TRNA DIMETHYLALLYLTRANSFERASE"/>
    <property type="match status" value="1"/>
</dbReference>
<dbReference type="Pfam" id="PF01715">
    <property type="entry name" value="IPPT"/>
    <property type="match status" value="1"/>
</dbReference>
<dbReference type="SUPFAM" id="SSF52540">
    <property type="entry name" value="P-loop containing nucleoside triphosphate hydrolases"/>
    <property type="match status" value="1"/>
</dbReference>
<accession>Q0AJ07</accession>
<sequence>MNLPDTESPAAIFLMGPTASGKSGLAIEIARHFPVEVVSVDSAQVYRYMDIGSAKPDKSIQIEIPHHLINLINPDESYSAAQFREDALSVMHGITARGRIPLLVGGTMLYFKVLQQGLATLPAADEAVRKELEQSAREQGWPAMHTVLSRLDPVIAERIKPNDSQRIQRALEVCYLTGRPMSAVLKQQQSRDFPYRVFNIALLPGDRSVLHARISQRFDKMLEIGLVDEVRMIRDQFQVTADMPAMRCVGYRQVYMYLENEISLAEMRERGVFATRQLAKRQLTWLRAMNELHGFDCLANQLAQQIIGFIQKQRIFA</sequence>
<comment type="function">
    <text evidence="1">Catalyzes the transfer of a dimethylallyl group onto the adenine at position 37 in tRNAs that read codons beginning with uridine, leading to the formation of N6-(dimethylallyl)adenosine (i(6)A).</text>
</comment>
<comment type="catalytic activity">
    <reaction evidence="1">
        <text>adenosine(37) in tRNA + dimethylallyl diphosphate = N(6)-dimethylallyladenosine(37) in tRNA + diphosphate</text>
        <dbReference type="Rhea" id="RHEA:26482"/>
        <dbReference type="Rhea" id="RHEA-COMP:10162"/>
        <dbReference type="Rhea" id="RHEA-COMP:10375"/>
        <dbReference type="ChEBI" id="CHEBI:33019"/>
        <dbReference type="ChEBI" id="CHEBI:57623"/>
        <dbReference type="ChEBI" id="CHEBI:74411"/>
        <dbReference type="ChEBI" id="CHEBI:74415"/>
        <dbReference type="EC" id="2.5.1.75"/>
    </reaction>
</comment>
<comment type="cofactor">
    <cofactor evidence="1">
        <name>Mg(2+)</name>
        <dbReference type="ChEBI" id="CHEBI:18420"/>
    </cofactor>
</comment>
<comment type="subunit">
    <text evidence="1">Monomer.</text>
</comment>
<comment type="similarity">
    <text evidence="1">Belongs to the IPP transferase family.</text>
</comment>
<protein>
    <recommendedName>
        <fullName evidence="1">tRNA dimethylallyltransferase</fullName>
        <ecNumber evidence="1">2.5.1.75</ecNumber>
    </recommendedName>
    <alternativeName>
        <fullName evidence="1">Dimethylallyl diphosphate:tRNA dimethylallyltransferase</fullName>
        <shortName evidence="1">DMAPP:tRNA dimethylallyltransferase</shortName>
        <shortName evidence="1">DMATase</shortName>
    </alternativeName>
    <alternativeName>
        <fullName evidence="1">Isopentenyl-diphosphate:tRNA isopentenyltransferase</fullName>
        <shortName evidence="1">IPP transferase</shortName>
        <shortName evidence="1">IPPT</shortName>
        <shortName evidence="1">IPTase</shortName>
    </alternativeName>
</protein>
<keyword id="KW-0067">ATP-binding</keyword>
<keyword id="KW-0460">Magnesium</keyword>
<keyword id="KW-0547">Nucleotide-binding</keyword>
<keyword id="KW-0808">Transferase</keyword>
<keyword id="KW-0819">tRNA processing</keyword>
<proteinExistence type="inferred from homology"/>
<feature type="chain" id="PRO_1000020626" description="tRNA dimethylallyltransferase">
    <location>
        <begin position="1"/>
        <end position="317"/>
    </location>
</feature>
<feature type="region of interest" description="Interaction with substrate tRNA" evidence="1">
    <location>
        <begin position="41"/>
        <end position="44"/>
    </location>
</feature>
<feature type="region of interest" description="Interaction with substrate tRNA" evidence="1">
    <location>
        <begin position="165"/>
        <end position="169"/>
    </location>
</feature>
<feature type="region of interest" description="Interaction with substrate tRNA" evidence="1">
    <location>
        <begin position="247"/>
        <end position="252"/>
    </location>
</feature>
<feature type="binding site" evidence="1">
    <location>
        <begin position="16"/>
        <end position="23"/>
    </location>
    <ligand>
        <name>ATP</name>
        <dbReference type="ChEBI" id="CHEBI:30616"/>
    </ligand>
</feature>
<feature type="binding site" evidence="1">
    <location>
        <begin position="18"/>
        <end position="23"/>
    </location>
    <ligand>
        <name>substrate</name>
    </ligand>
</feature>
<feature type="site" description="Interaction with substrate tRNA" evidence="1">
    <location>
        <position position="107"/>
    </location>
</feature>
<feature type="site" description="Interaction with substrate tRNA" evidence="1">
    <location>
        <position position="129"/>
    </location>
</feature>
<name>MIAA_NITEC</name>
<organism>
    <name type="scientific">Nitrosomonas eutropha (strain DSM 101675 / C91 / Nm57)</name>
    <dbReference type="NCBI Taxonomy" id="335283"/>
    <lineage>
        <taxon>Bacteria</taxon>
        <taxon>Pseudomonadati</taxon>
        <taxon>Pseudomonadota</taxon>
        <taxon>Betaproteobacteria</taxon>
        <taxon>Nitrosomonadales</taxon>
        <taxon>Nitrosomonadaceae</taxon>
        <taxon>Nitrosomonas</taxon>
    </lineage>
</organism>